<reference key="1">
    <citation type="journal article" date="2011" name="Appl. Environ. Microbiol.">
        <title>Genomic potential of Marinobacter aquaeolei, a biogeochemical 'opportunitroph'.</title>
        <authorList>
            <person name="Singer E."/>
            <person name="Webb E.A."/>
            <person name="Nelson W.C."/>
            <person name="Heidelberg J.F."/>
            <person name="Ivanova N."/>
            <person name="Pati A."/>
            <person name="Edwards K.J."/>
        </authorList>
    </citation>
    <scope>NUCLEOTIDE SEQUENCE [LARGE SCALE GENOMIC DNA]</scope>
    <source>
        <strain>ATCC 700491 / DSM 11845 / VT8</strain>
    </source>
</reference>
<dbReference type="EMBL" id="CP000514">
    <property type="protein sequence ID" value="ABM17955.1"/>
    <property type="molecule type" value="Genomic_DNA"/>
</dbReference>
<dbReference type="RefSeq" id="WP_011784377.1">
    <property type="nucleotide sequence ID" value="NC_008740.1"/>
</dbReference>
<dbReference type="SMR" id="A1TYY6"/>
<dbReference type="STRING" id="351348.Maqu_0859"/>
<dbReference type="GeneID" id="31820235"/>
<dbReference type="KEGG" id="maq:Maqu_0859"/>
<dbReference type="eggNOG" id="COG0268">
    <property type="taxonomic scope" value="Bacteria"/>
</dbReference>
<dbReference type="HOGENOM" id="CLU_160655_4_0_6"/>
<dbReference type="OrthoDB" id="9807974at2"/>
<dbReference type="Proteomes" id="UP000000998">
    <property type="component" value="Chromosome"/>
</dbReference>
<dbReference type="GO" id="GO:0005829">
    <property type="term" value="C:cytosol"/>
    <property type="evidence" value="ECO:0007669"/>
    <property type="project" value="TreeGrafter"/>
</dbReference>
<dbReference type="GO" id="GO:0015935">
    <property type="term" value="C:small ribosomal subunit"/>
    <property type="evidence" value="ECO:0007669"/>
    <property type="project" value="TreeGrafter"/>
</dbReference>
<dbReference type="GO" id="GO:0070181">
    <property type="term" value="F:small ribosomal subunit rRNA binding"/>
    <property type="evidence" value="ECO:0007669"/>
    <property type="project" value="TreeGrafter"/>
</dbReference>
<dbReference type="GO" id="GO:0003735">
    <property type="term" value="F:structural constituent of ribosome"/>
    <property type="evidence" value="ECO:0007669"/>
    <property type="project" value="InterPro"/>
</dbReference>
<dbReference type="GO" id="GO:0006412">
    <property type="term" value="P:translation"/>
    <property type="evidence" value="ECO:0007669"/>
    <property type="project" value="UniProtKB-UniRule"/>
</dbReference>
<dbReference type="FunFam" id="1.20.58.110:FF:000001">
    <property type="entry name" value="30S ribosomal protein S20"/>
    <property type="match status" value="1"/>
</dbReference>
<dbReference type="Gene3D" id="1.20.58.110">
    <property type="entry name" value="Ribosomal protein S20"/>
    <property type="match status" value="1"/>
</dbReference>
<dbReference type="HAMAP" id="MF_00500">
    <property type="entry name" value="Ribosomal_bS20"/>
    <property type="match status" value="1"/>
</dbReference>
<dbReference type="InterPro" id="IPR002583">
    <property type="entry name" value="Ribosomal_bS20"/>
</dbReference>
<dbReference type="InterPro" id="IPR036510">
    <property type="entry name" value="Ribosomal_bS20_sf"/>
</dbReference>
<dbReference type="NCBIfam" id="TIGR00029">
    <property type="entry name" value="S20"/>
    <property type="match status" value="1"/>
</dbReference>
<dbReference type="PANTHER" id="PTHR33398">
    <property type="entry name" value="30S RIBOSOMAL PROTEIN S20"/>
    <property type="match status" value="1"/>
</dbReference>
<dbReference type="PANTHER" id="PTHR33398:SF1">
    <property type="entry name" value="SMALL RIBOSOMAL SUBUNIT PROTEIN BS20C"/>
    <property type="match status" value="1"/>
</dbReference>
<dbReference type="Pfam" id="PF01649">
    <property type="entry name" value="Ribosomal_S20p"/>
    <property type="match status" value="1"/>
</dbReference>
<dbReference type="SUPFAM" id="SSF46992">
    <property type="entry name" value="Ribosomal protein S20"/>
    <property type="match status" value="1"/>
</dbReference>
<keyword id="KW-0687">Ribonucleoprotein</keyword>
<keyword id="KW-0689">Ribosomal protein</keyword>
<keyword id="KW-0694">RNA-binding</keyword>
<keyword id="KW-0699">rRNA-binding</keyword>
<organism>
    <name type="scientific">Marinobacter nauticus (strain ATCC 700491 / DSM 11845 / VT8)</name>
    <name type="common">Marinobacter aquaeolei</name>
    <dbReference type="NCBI Taxonomy" id="351348"/>
    <lineage>
        <taxon>Bacteria</taxon>
        <taxon>Pseudomonadati</taxon>
        <taxon>Pseudomonadota</taxon>
        <taxon>Gammaproteobacteria</taxon>
        <taxon>Pseudomonadales</taxon>
        <taxon>Marinobacteraceae</taxon>
        <taxon>Marinobacter</taxon>
    </lineage>
</organism>
<proteinExistence type="inferred from homology"/>
<sequence length="89" mass="9984">MANSPQAKKRARQNEKNRKHNASLRSMARTYMKKVDAKIKAGNHDEAQAALKEAQPIMDSMVNKGIFAKNKIARHKSRLNAKIKALKSA</sequence>
<evidence type="ECO:0000255" key="1">
    <source>
        <dbReference type="HAMAP-Rule" id="MF_00500"/>
    </source>
</evidence>
<evidence type="ECO:0000256" key="2">
    <source>
        <dbReference type="SAM" id="MobiDB-lite"/>
    </source>
</evidence>
<evidence type="ECO:0000305" key="3"/>
<accession>A1TYY6</accession>
<comment type="function">
    <text evidence="1">Binds directly to 16S ribosomal RNA.</text>
</comment>
<comment type="similarity">
    <text evidence="1">Belongs to the bacterial ribosomal protein bS20 family.</text>
</comment>
<feature type="chain" id="PRO_1000014601" description="Small ribosomal subunit protein bS20">
    <location>
        <begin position="1"/>
        <end position="89"/>
    </location>
</feature>
<feature type="region of interest" description="Disordered" evidence="2">
    <location>
        <begin position="1"/>
        <end position="26"/>
    </location>
</feature>
<feature type="compositionally biased region" description="Basic residues" evidence="2">
    <location>
        <begin position="7"/>
        <end position="22"/>
    </location>
</feature>
<name>RS20_MARN8</name>
<protein>
    <recommendedName>
        <fullName evidence="1">Small ribosomal subunit protein bS20</fullName>
    </recommendedName>
    <alternativeName>
        <fullName evidence="3">30S ribosomal protein S20</fullName>
    </alternativeName>
</protein>
<gene>
    <name evidence="1" type="primary">rpsT</name>
    <name type="ordered locus">Maqu_0859</name>
</gene>